<sequence>MNKTAEDLLDSLKCASKDLSSALTSVTIKFNCIFISTIVLISYCFILLAIQALLRHNIFSNSTRLILIVCLLNSVVHQTTMMETRVRQIYRSFLFASDPCKLLYRSSDCVVDLYFFFLTGYFSTYSVFSLTSDRLVSHYKSKFYHTHQYFIAISLLVIQLLLTLVSFYIAFYGVSLAGYVSVCIQYPKAAVQYGTINTVRTMVMVCCLIVTGFTYYLSVKSEKQIQKISYSPGERYSAYENITTSQSVCIFIILQLSCVMLTSIGMNLLLMMGEAMSEGTFTTIALFLPGITYANLCLPLVIYFKTKLTIRNRKFRIAVMTSMYGDAGEHIARLKKSWE</sequence>
<keyword id="KW-0472">Membrane</keyword>
<keyword id="KW-1185">Reference proteome</keyword>
<keyword id="KW-0812">Transmembrane</keyword>
<keyword id="KW-1133">Transmembrane helix</keyword>
<accession>O17846</accession>
<accession>O18055</accession>
<dbReference type="EMBL" id="Z93380">
    <property type="protein sequence ID" value="CAB07602.2"/>
    <property type="molecule type" value="Genomic_DNA"/>
</dbReference>
<dbReference type="EMBL" id="Z81587">
    <property type="protein sequence ID" value="CAB07602.2"/>
    <property type="status" value="JOINED"/>
    <property type="molecule type" value="Genomic_DNA"/>
</dbReference>
<dbReference type="PIR" id="T21478">
    <property type="entry name" value="T21478"/>
</dbReference>
<dbReference type="RefSeq" id="NP_493218.2">
    <property type="nucleotide sequence ID" value="NM_060817.2"/>
</dbReference>
<dbReference type="SMR" id="O17846"/>
<dbReference type="FunCoup" id="O17846">
    <property type="interactions" value="9"/>
</dbReference>
<dbReference type="STRING" id="6239.F28C12.7.1"/>
<dbReference type="PaxDb" id="6239-F28C12.7"/>
<dbReference type="EnsemblMetazoa" id="F28C12.7.1">
    <property type="protein sequence ID" value="F28C12.7.1"/>
    <property type="gene ID" value="WBGene00005048"/>
</dbReference>
<dbReference type="GeneID" id="185059"/>
<dbReference type="KEGG" id="cel:CELE_F28C12.7"/>
<dbReference type="UCSC" id="F28C12.7">
    <property type="organism name" value="c. elegans"/>
</dbReference>
<dbReference type="AGR" id="WB:WBGene00005048"/>
<dbReference type="CTD" id="185059"/>
<dbReference type="WormBase" id="F28C12.7">
    <property type="protein sequence ID" value="CE33386"/>
    <property type="gene ID" value="WBGene00005048"/>
    <property type="gene designation" value="sra-22"/>
</dbReference>
<dbReference type="eggNOG" id="ENOG502THAY">
    <property type="taxonomic scope" value="Eukaryota"/>
</dbReference>
<dbReference type="GeneTree" id="ENSGT00970000195862"/>
<dbReference type="HOGENOM" id="CLU_070413_0_0_1"/>
<dbReference type="InParanoid" id="O17846"/>
<dbReference type="PhylomeDB" id="O17846"/>
<dbReference type="PRO" id="PR:O17846"/>
<dbReference type="Proteomes" id="UP000001940">
    <property type="component" value="Chromosome I"/>
</dbReference>
<dbReference type="GO" id="GO:0016020">
    <property type="term" value="C:membrane"/>
    <property type="evidence" value="ECO:0007669"/>
    <property type="project" value="UniProtKB-SubCell"/>
</dbReference>
<dbReference type="GO" id="GO:0004930">
    <property type="term" value="F:G protein-coupled receptor activity"/>
    <property type="evidence" value="ECO:0007669"/>
    <property type="project" value="InterPro"/>
</dbReference>
<dbReference type="GO" id="GO:0007606">
    <property type="term" value="P:sensory perception of chemical stimulus"/>
    <property type="evidence" value="ECO:0007669"/>
    <property type="project" value="InterPro"/>
</dbReference>
<dbReference type="InterPro" id="IPR000344">
    <property type="entry name" value="7TM_GPCR_serpentine_rcpt_Sra"/>
</dbReference>
<dbReference type="PANTHER" id="PTHR31582:SF2">
    <property type="entry name" value="G-PROTEIN COUPLED RECEPTORS FAMILY 1 PROFILE DOMAIN-CONTAINING PROTEIN-RELATED"/>
    <property type="match status" value="1"/>
</dbReference>
<dbReference type="PANTHER" id="PTHR31582">
    <property type="entry name" value="SERPENTINE RECEPTOR, CLASS A (ALPHA)-RELATED-RELATED"/>
    <property type="match status" value="1"/>
</dbReference>
<dbReference type="Pfam" id="PF02117">
    <property type="entry name" value="7TM_GPCR_Sra"/>
    <property type="match status" value="1"/>
</dbReference>
<dbReference type="PRINTS" id="PR00697">
    <property type="entry name" value="TMPROTEINSRA"/>
</dbReference>
<name>SRA22_CAEEL</name>
<gene>
    <name type="primary">sra-22</name>
    <name type="ORF">F28C12.7</name>
</gene>
<organism>
    <name type="scientific">Caenorhabditis elegans</name>
    <dbReference type="NCBI Taxonomy" id="6239"/>
    <lineage>
        <taxon>Eukaryota</taxon>
        <taxon>Metazoa</taxon>
        <taxon>Ecdysozoa</taxon>
        <taxon>Nematoda</taxon>
        <taxon>Chromadorea</taxon>
        <taxon>Rhabditida</taxon>
        <taxon>Rhabditina</taxon>
        <taxon>Rhabditomorpha</taxon>
        <taxon>Rhabditoidea</taxon>
        <taxon>Rhabditidae</taxon>
        <taxon>Peloderinae</taxon>
        <taxon>Caenorhabditis</taxon>
    </lineage>
</organism>
<reference key="1">
    <citation type="journal article" date="1998" name="Science">
        <title>Genome sequence of the nematode C. elegans: a platform for investigating biology.</title>
        <authorList>
            <consortium name="The C. elegans sequencing consortium"/>
        </authorList>
    </citation>
    <scope>NUCLEOTIDE SEQUENCE [LARGE SCALE GENOMIC DNA]</scope>
    <source>
        <strain>Bristol N2</strain>
    </source>
</reference>
<feature type="chain" id="PRO_0000104484" description="Serpentine receptor class alpha-22">
    <location>
        <begin position="1"/>
        <end position="339"/>
    </location>
</feature>
<feature type="transmembrane region" description="Helical" evidence="1">
    <location>
        <begin position="33"/>
        <end position="53"/>
    </location>
</feature>
<feature type="transmembrane region" description="Helical" evidence="1">
    <location>
        <begin position="110"/>
        <end position="130"/>
    </location>
</feature>
<feature type="transmembrane region" description="Helical" evidence="1">
    <location>
        <begin position="150"/>
        <end position="170"/>
    </location>
</feature>
<feature type="transmembrane region" description="Helical" evidence="1">
    <location>
        <begin position="199"/>
        <end position="219"/>
    </location>
</feature>
<feature type="transmembrane region" description="Helical" evidence="1">
    <location>
        <begin position="250"/>
        <end position="270"/>
    </location>
</feature>
<feature type="transmembrane region" description="Helical" evidence="1">
    <location>
        <begin position="284"/>
        <end position="304"/>
    </location>
</feature>
<comment type="subcellular location">
    <subcellularLocation>
        <location evidence="2">Membrane</location>
        <topology evidence="2">Multi-pass membrane protein</topology>
    </subcellularLocation>
</comment>
<comment type="similarity">
    <text evidence="2">Belongs to the nematode receptor-like protein sra family.</text>
</comment>
<proteinExistence type="inferred from homology"/>
<evidence type="ECO:0000255" key="1"/>
<evidence type="ECO:0000305" key="2"/>
<protein>
    <recommendedName>
        <fullName>Serpentine receptor class alpha-22</fullName>
        <shortName>Protein sra-22</shortName>
    </recommendedName>
</protein>